<organism>
    <name type="scientific">Dictyostelium discoideum</name>
    <name type="common">Social amoeba</name>
    <dbReference type="NCBI Taxonomy" id="44689"/>
    <lineage>
        <taxon>Eukaryota</taxon>
        <taxon>Amoebozoa</taxon>
        <taxon>Evosea</taxon>
        <taxon>Eumycetozoa</taxon>
        <taxon>Dictyostelia</taxon>
        <taxon>Dictyosteliales</taxon>
        <taxon>Dictyosteliaceae</taxon>
        <taxon>Dictyostelium</taxon>
    </lineage>
</organism>
<evidence type="ECO:0000250" key="1"/>
<evidence type="ECO:0000305" key="2"/>
<comment type="cofactor">
    <cofactor evidence="1">
        <name>heme</name>
        <dbReference type="ChEBI" id="CHEBI:30413"/>
    </cofactor>
</comment>
<comment type="similarity">
    <text evidence="2">Belongs to the cytochrome P450 family.</text>
</comment>
<comment type="caution">
    <text evidence="2">Could be the product of a pseudogene.</text>
</comment>
<gene>
    <name type="primary">cyp520B1</name>
    <name type="ORF">DDB_G0291702</name>
</gene>
<sequence>MTNNKLLFKKDVNGPWSLPIIGGIYLINDNPNRALTKLSKKYGGIYKIWLGESFSMVVSDPEIVNEIWVKQHDNFINRPKNITHKMFSSNYRSLNFGDNPNWKFNRSMASSHFTKTKLLSSKVTSVVEKKLNKLIETMEYHSINKLPFDSYVGFSEYSLNIILNMLVSMDIDECENSTQNVIYSINEIFKMLSTNSPQYSFPYLKFFFKKDLNNFKFHLDKIKSFIHSIYLKQLESYDPSNPRNILDSFISDLQSNDIDILLQICIDIVVAGTDTVANLLQWFVLFCINYPEIQEKLYNEIIEVVGKDCKVLKYEHISKMPYLYGCFRESLRIRPVTPLSLPRVAKCDTYIKDDIFIPKGATIIQNIFGMGNDEKYISEPNKFKPERWVEYIKNKKVNKNGNENSVNKYFNDLDKISIPFGVGKRQCLSPAMAEQESLLSIATVVLNYKLKSNGQKKLNEKEVYSITIKPQPFKLFLEKRV</sequence>
<name>C520B_DICDI</name>
<proteinExistence type="uncertain"/>
<accession>Q54E98</accession>
<dbReference type="EC" id="1.14.-.-"/>
<dbReference type="EMBL" id="AAFI02000181">
    <property type="protein sequence ID" value="EAL61587.1"/>
    <property type="molecule type" value="Genomic_DNA"/>
</dbReference>
<dbReference type="RefSeq" id="XP_630004.1">
    <property type="nucleotide sequence ID" value="XM_630002.1"/>
</dbReference>
<dbReference type="SMR" id="Q54E98"/>
<dbReference type="FunCoup" id="Q54E98">
    <property type="interactions" value="1"/>
</dbReference>
<dbReference type="STRING" id="44689.Q54E98"/>
<dbReference type="PaxDb" id="44689-DDB0252692"/>
<dbReference type="EnsemblProtists" id="EAL61587">
    <property type="protein sequence ID" value="EAL61587"/>
    <property type="gene ID" value="DDB_G0291702"/>
</dbReference>
<dbReference type="GeneID" id="8628294"/>
<dbReference type="KEGG" id="ddi:DDB_G0291702"/>
<dbReference type="dictyBase" id="DDB_G0291702">
    <property type="gene designation" value="cyp520B1"/>
</dbReference>
<dbReference type="VEuPathDB" id="AmoebaDB:DDB_G0291702"/>
<dbReference type="eggNOG" id="KOG0156">
    <property type="taxonomic scope" value="Eukaryota"/>
</dbReference>
<dbReference type="HOGENOM" id="CLU_001570_4_0_1"/>
<dbReference type="InParanoid" id="Q54E98"/>
<dbReference type="OMA" id="KVSNTHI"/>
<dbReference type="PhylomeDB" id="Q54E98"/>
<dbReference type="Proteomes" id="UP000002195">
    <property type="component" value="Chromosome 6"/>
</dbReference>
<dbReference type="GO" id="GO:0020037">
    <property type="term" value="F:heme binding"/>
    <property type="evidence" value="ECO:0007669"/>
    <property type="project" value="InterPro"/>
</dbReference>
<dbReference type="GO" id="GO:0005506">
    <property type="term" value="F:iron ion binding"/>
    <property type="evidence" value="ECO:0007669"/>
    <property type="project" value="InterPro"/>
</dbReference>
<dbReference type="GO" id="GO:0004497">
    <property type="term" value="F:monooxygenase activity"/>
    <property type="evidence" value="ECO:0007669"/>
    <property type="project" value="UniProtKB-KW"/>
</dbReference>
<dbReference type="GO" id="GO:0016705">
    <property type="term" value="F:oxidoreductase activity, acting on paired donors, with incorporation or reduction of molecular oxygen"/>
    <property type="evidence" value="ECO:0007669"/>
    <property type="project" value="InterPro"/>
</dbReference>
<dbReference type="CDD" id="cd20617">
    <property type="entry name" value="CYP1_2-like"/>
    <property type="match status" value="1"/>
</dbReference>
<dbReference type="Gene3D" id="1.10.630.10">
    <property type="entry name" value="Cytochrome P450"/>
    <property type="match status" value="1"/>
</dbReference>
<dbReference type="InterPro" id="IPR001128">
    <property type="entry name" value="Cyt_P450"/>
</dbReference>
<dbReference type="InterPro" id="IPR002401">
    <property type="entry name" value="Cyt_P450_E_grp-I"/>
</dbReference>
<dbReference type="InterPro" id="IPR036396">
    <property type="entry name" value="Cyt_P450_sf"/>
</dbReference>
<dbReference type="PANTHER" id="PTHR24289">
    <property type="entry name" value="STEROID 17-ALPHA-HYDROXYLASE/17,20 LYASE"/>
    <property type="match status" value="1"/>
</dbReference>
<dbReference type="PANTHER" id="PTHR24289:SF1">
    <property type="entry name" value="STEROID 17-ALPHA-HYDROXYLASE_17,20 LYASE"/>
    <property type="match status" value="1"/>
</dbReference>
<dbReference type="Pfam" id="PF00067">
    <property type="entry name" value="p450"/>
    <property type="match status" value="1"/>
</dbReference>
<dbReference type="PRINTS" id="PR00463">
    <property type="entry name" value="EP450I"/>
</dbReference>
<dbReference type="PRINTS" id="PR00385">
    <property type="entry name" value="P450"/>
</dbReference>
<dbReference type="SUPFAM" id="SSF48264">
    <property type="entry name" value="Cytochrome P450"/>
    <property type="match status" value="1"/>
</dbReference>
<keyword id="KW-0349">Heme</keyword>
<keyword id="KW-0408">Iron</keyword>
<keyword id="KW-0479">Metal-binding</keyword>
<keyword id="KW-0503">Monooxygenase</keyword>
<keyword id="KW-0560">Oxidoreductase</keyword>
<keyword id="KW-1185">Reference proteome</keyword>
<reference key="1">
    <citation type="journal article" date="2005" name="Nature">
        <title>The genome of the social amoeba Dictyostelium discoideum.</title>
        <authorList>
            <person name="Eichinger L."/>
            <person name="Pachebat J.A."/>
            <person name="Gloeckner G."/>
            <person name="Rajandream M.A."/>
            <person name="Sucgang R."/>
            <person name="Berriman M."/>
            <person name="Song J."/>
            <person name="Olsen R."/>
            <person name="Szafranski K."/>
            <person name="Xu Q."/>
            <person name="Tunggal B."/>
            <person name="Kummerfeld S."/>
            <person name="Madera M."/>
            <person name="Konfortov B.A."/>
            <person name="Rivero F."/>
            <person name="Bankier A.T."/>
            <person name="Lehmann R."/>
            <person name="Hamlin N."/>
            <person name="Davies R."/>
            <person name="Gaudet P."/>
            <person name="Fey P."/>
            <person name="Pilcher K."/>
            <person name="Chen G."/>
            <person name="Saunders D."/>
            <person name="Sodergren E.J."/>
            <person name="Davis P."/>
            <person name="Kerhornou A."/>
            <person name="Nie X."/>
            <person name="Hall N."/>
            <person name="Anjard C."/>
            <person name="Hemphill L."/>
            <person name="Bason N."/>
            <person name="Farbrother P."/>
            <person name="Desany B."/>
            <person name="Just E."/>
            <person name="Morio T."/>
            <person name="Rost R."/>
            <person name="Churcher C.M."/>
            <person name="Cooper J."/>
            <person name="Haydock S."/>
            <person name="van Driessche N."/>
            <person name="Cronin A."/>
            <person name="Goodhead I."/>
            <person name="Muzny D.M."/>
            <person name="Mourier T."/>
            <person name="Pain A."/>
            <person name="Lu M."/>
            <person name="Harper D."/>
            <person name="Lindsay R."/>
            <person name="Hauser H."/>
            <person name="James K.D."/>
            <person name="Quiles M."/>
            <person name="Madan Babu M."/>
            <person name="Saito T."/>
            <person name="Buchrieser C."/>
            <person name="Wardroper A."/>
            <person name="Felder M."/>
            <person name="Thangavelu M."/>
            <person name="Johnson D."/>
            <person name="Knights A."/>
            <person name="Loulseged H."/>
            <person name="Mungall K.L."/>
            <person name="Oliver K."/>
            <person name="Price C."/>
            <person name="Quail M.A."/>
            <person name="Urushihara H."/>
            <person name="Hernandez J."/>
            <person name="Rabbinowitsch E."/>
            <person name="Steffen D."/>
            <person name="Sanders M."/>
            <person name="Ma J."/>
            <person name="Kohara Y."/>
            <person name="Sharp S."/>
            <person name="Simmonds M.N."/>
            <person name="Spiegler S."/>
            <person name="Tivey A."/>
            <person name="Sugano S."/>
            <person name="White B."/>
            <person name="Walker D."/>
            <person name="Woodward J.R."/>
            <person name="Winckler T."/>
            <person name="Tanaka Y."/>
            <person name="Shaulsky G."/>
            <person name="Schleicher M."/>
            <person name="Weinstock G.M."/>
            <person name="Rosenthal A."/>
            <person name="Cox E.C."/>
            <person name="Chisholm R.L."/>
            <person name="Gibbs R.A."/>
            <person name="Loomis W.F."/>
            <person name="Platzer M."/>
            <person name="Kay R.R."/>
            <person name="Williams J.G."/>
            <person name="Dear P.H."/>
            <person name="Noegel A.A."/>
            <person name="Barrell B.G."/>
            <person name="Kuspa A."/>
        </authorList>
    </citation>
    <scope>NUCLEOTIDE SEQUENCE [LARGE SCALE GENOMIC DNA]</scope>
    <source>
        <strain>AX4</strain>
    </source>
</reference>
<feature type="chain" id="PRO_0000318838" description="Putative cytochrome P450 520B1">
    <location>
        <begin position="1"/>
        <end position="481"/>
    </location>
</feature>
<feature type="binding site" description="axial binding residue" evidence="1">
    <location>
        <position position="427"/>
    </location>
    <ligand>
        <name>heme</name>
        <dbReference type="ChEBI" id="CHEBI:30413"/>
    </ligand>
    <ligandPart>
        <name>Fe</name>
        <dbReference type="ChEBI" id="CHEBI:18248"/>
    </ligandPart>
</feature>
<protein>
    <recommendedName>
        <fullName>Putative cytochrome P450 520B1</fullName>
        <ecNumber>1.14.-.-</ecNumber>
    </recommendedName>
</protein>